<reference key="1">
    <citation type="journal article" date="2006" name="Proc. Natl. Acad. Sci. U.S.A.">
        <title>Identification of genes subject to positive selection in uropathogenic strains of Escherichia coli: a comparative genomics approach.</title>
        <authorList>
            <person name="Chen S.L."/>
            <person name="Hung C.-S."/>
            <person name="Xu J."/>
            <person name="Reigstad C.S."/>
            <person name="Magrini V."/>
            <person name="Sabo A."/>
            <person name="Blasiar D."/>
            <person name="Bieri T."/>
            <person name="Meyer R.R."/>
            <person name="Ozersky P."/>
            <person name="Armstrong J.R."/>
            <person name="Fulton R.S."/>
            <person name="Latreille J.P."/>
            <person name="Spieth J."/>
            <person name="Hooton T.M."/>
            <person name="Mardis E.R."/>
            <person name="Hultgren S.J."/>
            <person name="Gordon J.I."/>
        </authorList>
    </citation>
    <scope>NUCLEOTIDE SEQUENCE [LARGE SCALE GENOMIC DNA]</scope>
    <source>
        <strain>UTI89 / UPEC</strain>
    </source>
</reference>
<comment type="function">
    <text evidence="2">Catalyzes the hydrolysis of N(4)-acetylcytidine (ac4C).</text>
</comment>
<comment type="catalytic activity">
    <reaction evidence="2">
        <text>N(4)-acetylcytidine + H2O = cytidine + acetate + H(+)</text>
        <dbReference type="Rhea" id="RHEA:62932"/>
        <dbReference type="ChEBI" id="CHEBI:15377"/>
        <dbReference type="ChEBI" id="CHEBI:15378"/>
        <dbReference type="ChEBI" id="CHEBI:17562"/>
        <dbReference type="ChEBI" id="CHEBI:30089"/>
        <dbReference type="ChEBI" id="CHEBI:70989"/>
        <dbReference type="EC" id="3.5.1.135"/>
    </reaction>
</comment>
<comment type="catalytic activity">
    <reaction evidence="2">
        <text>N(4)-acetyl-2'-deoxycytidine + H2O = 2'-deoxycytidine + acetate + H(+)</text>
        <dbReference type="Rhea" id="RHEA:62936"/>
        <dbReference type="ChEBI" id="CHEBI:15377"/>
        <dbReference type="ChEBI" id="CHEBI:15378"/>
        <dbReference type="ChEBI" id="CHEBI:15698"/>
        <dbReference type="ChEBI" id="CHEBI:30089"/>
        <dbReference type="ChEBI" id="CHEBI:146133"/>
        <dbReference type="EC" id="3.5.1.135"/>
    </reaction>
</comment>
<comment type="catalytic activity">
    <reaction evidence="2">
        <text>N(4)-acetylcytosine + H2O = cytosine + acetate + H(+)</text>
        <dbReference type="Rhea" id="RHEA:62940"/>
        <dbReference type="ChEBI" id="CHEBI:15377"/>
        <dbReference type="ChEBI" id="CHEBI:15378"/>
        <dbReference type="ChEBI" id="CHEBI:16040"/>
        <dbReference type="ChEBI" id="CHEBI:30089"/>
        <dbReference type="ChEBI" id="CHEBI:146134"/>
        <dbReference type="EC" id="3.5.1.135"/>
    </reaction>
</comment>
<comment type="similarity">
    <text evidence="2">Belongs to the N(4)-acetylcytidine amidohydrolase family.</text>
</comment>
<protein>
    <recommendedName>
        <fullName evidence="2">N(4)-acetylcytidine amidohydrolase</fullName>
        <shortName evidence="2">ac4C amidohydrolase</shortName>
        <ecNumber evidence="2">3.5.1.135</ecNumber>
    </recommendedName>
</protein>
<organism>
    <name type="scientific">Escherichia coli (strain UTI89 / UPEC)</name>
    <dbReference type="NCBI Taxonomy" id="364106"/>
    <lineage>
        <taxon>Bacteria</taxon>
        <taxon>Pseudomonadati</taxon>
        <taxon>Pseudomonadota</taxon>
        <taxon>Gammaproteobacteria</taxon>
        <taxon>Enterobacterales</taxon>
        <taxon>Enterobacteriaceae</taxon>
        <taxon>Escherichia</taxon>
    </lineage>
</organism>
<accession>Q1R7D0</accession>
<dbReference type="EC" id="3.5.1.135" evidence="2"/>
<dbReference type="EMBL" id="CP000243">
    <property type="protein sequence ID" value="ABE08734.1"/>
    <property type="molecule type" value="Genomic_DNA"/>
</dbReference>
<dbReference type="RefSeq" id="WP_001182956.1">
    <property type="nucleotide sequence ID" value="NZ_CP064825.1"/>
</dbReference>
<dbReference type="SMR" id="Q1R7D0"/>
<dbReference type="KEGG" id="eci:UTI89_C3286"/>
<dbReference type="HOGENOM" id="CLU_152586_0_0_6"/>
<dbReference type="Proteomes" id="UP000001952">
    <property type="component" value="Chromosome"/>
</dbReference>
<dbReference type="GO" id="GO:0005829">
    <property type="term" value="C:cytosol"/>
    <property type="evidence" value="ECO:0007669"/>
    <property type="project" value="TreeGrafter"/>
</dbReference>
<dbReference type="GO" id="GO:0016813">
    <property type="term" value="F:hydrolase activity, acting on carbon-nitrogen (but not peptide) bonds, in linear amidines"/>
    <property type="evidence" value="ECO:0007669"/>
    <property type="project" value="UniProtKB-UniRule"/>
</dbReference>
<dbReference type="GO" id="GO:0106251">
    <property type="term" value="F:N4-acetylcytidine amidohydrolase activity"/>
    <property type="evidence" value="ECO:0007669"/>
    <property type="project" value="RHEA"/>
</dbReference>
<dbReference type="CDD" id="cd06552">
    <property type="entry name" value="ASCH_yqfb_like"/>
    <property type="match status" value="1"/>
</dbReference>
<dbReference type="FunFam" id="2.30.130.30:FF:000001">
    <property type="entry name" value="UPF0267 protein YqfB"/>
    <property type="match status" value="1"/>
</dbReference>
<dbReference type="Gene3D" id="2.30.130.30">
    <property type="entry name" value="Hypothetical protein"/>
    <property type="match status" value="1"/>
</dbReference>
<dbReference type="HAMAP" id="MF_00684">
    <property type="entry name" value="ac4C_amidohydr"/>
    <property type="match status" value="1"/>
</dbReference>
<dbReference type="InterPro" id="IPR008314">
    <property type="entry name" value="AC4CH"/>
</dbReference>
<dbReference type="InterPro" id="IPR007374">
    <property type="entry name" value="ASCH_domain"/>
</dbReference>
<dbReference type="InterPro" id="IPR015947">
    <property type="entry name" value="PUA-like_sf"/>
</dbReference>
<dbReference type="NCBIfam" id="NF003443">
    <property type="entry name" value="PRK04980.1"/>
    <property type="match status" value="1"/>
</dbReference>
<dbReference type="PANTHER" id="PTHR38088">
    <property type="entry name" value="UCP029143 FAMILY PROTEIN"/>
    <property type="match status" value="1"/>
</dbReference>
<dbReference type="PANTHER" id="PTHR38088:SF2">
    <property type="entry name" value="UCP029143 FAMILY PROTEIN"/>
    <property type="match status" value="1"/>
</dbReference>
<dbReference type="Pfam" id="PF04266">
    <property type="entry name" value="ASCH"/>
    <property type="match status" value="1"/>
</dbReference>
<dbReference type="PIRSF" id="PIRSF029143">
    <property type="entry name" value="UCP029143"/>
    <property type="match status" value="1"/>
</dbReference>
<dbReference type="SMART" id="SM01022">
    <property type="entry name" value="ASCH"/>
    <property type="match status" value="1"/>
</dbReference>
<dbReference type="SUPFAM" id="SSF88697">
    <property type="entry name" value="PUA domain-like"/>
    <property type="match status" value="1"/>
</dbReference>
<evidence type="ECO:0000255" key="1"/>
<evidence type="ECO:0000255" key="2">
    <source>
        <dbReference type="HAMAP-Rule" id="MF_00684"/>
    </source>
</evidence>
<gene>
    <name type="primary">yqfB</name>
    <name type="ordered locus">UTI89_C3286</name>
</gene>
<sequence>MQPNDITFFQRFQDDILAGRKTITIRDESESHFKTGDVLRVGRFEDDGYFCTIEVTATSTVTLDTLTEKHAEQENMTLTELKKVIADIYPDQTQFYVIEFKCL</sequence>
<proteinExistence type="inferred from homology"/>
<feature type="chain" id="PRO_1000044947" description="N(4)-acetylcytidine amidohydrolase">
    <location>
        <begin position="1"/>
        <end position="103"/>
    </location>
</feature>
<feature type="domain" description="ASCH" evidence="1">
    <location>
        <begin position="6"/>
        <end position="101"/>
    </location>
</feature>
<feature type="active site" description="Proton acceptor" evidence="2">
    <location>
        <position position="21"/>
    </location>
</feature>
<feature type="active site" description="Nucleophile" evidence="2">
    <location>
        <position position="24"/>
    </location>
</feature>
<feature type="active site" description="Proton donor" evidence="2">
    <location>
        <position position="74"/>
    </location>
</feature>
<name>AC4CH_ECOUT</name>
<keyword id="KW-0378">Hydrolase</keyword>